<accession>A0A455ZAR2</accession>
<name>PNT87_HUMAN</name>
<organism evidence="4">
    <name type="scientific">Homo sapiens</name>
    <name type="common">Human</name>
    <dbReference type="NCBI Taxonomy" id="9606"/>
    <lineage>
        <taxon>Eukaryota</taxon>
        <taxon>Metazoa</taxon>
        <taxon>Chordata</taxon>
        <taxon>Craniata</taxon>
        <taxon>Vertebrata</taxon>
        <taxon>Euteleostomi</taxon>
        <taxon>Mammalia</taxon>
        <taxon>Eutheria</taxon>
        <taxon>Euarchontoglires</taxon>
        <taxon>Primates</taxon>
        <taxon>Haplorrhini</taxon>
        <taxon>Catarrhini</taxon>
        <taxon>Hominidae</taxon>
        <taxon>Homo</taxon>
    </lineage>
</organism>
<protein>
    <recommendedName>
        <fullName evidence="3">Transcriptional regulator PINT87aa</fullName>
    </recommendedName>
</protein>
<evidence type="ECO:0000269" key="1">
    <source>
    </source>
</evidence>
<evidence type="ECO:0000269" key="2">
    <source>
    </source>
</evidence>
<evidence type="ECO:0000305" key="3"/>
<evidence type="ECO:0000312" key="4">
    <source>
        <dbReference type="EMBL" id="DAC74127.1"/>
    </source>
</evidence>
<evidence type="ECO:0000312" key="5">
    <source>
        <dbReference type="EMBL" id="EAW83777.1"/>
    </source>
</evidence>
<evidence type="ECO:0000312" key="6">
    <source>
        <dbReference type="HGNC" id="HGNC:26885"/>
    </source>
</evidence>
<reference evidence="5" key="1">
    <citation type="submission" date="2005-07" db="EMBL/GenBank/DDBJ databases">
        <authorList>
            <person name="Mural R.J."/>
            <person name="Istrail S."/>
            <person name="Sutton G."/>
            <person name="Florea L."/>
            <person name="Halpern A.L."/>
            <person name="Mobarry C.M."/>
            <person name="Lippert R."/>
            <person name="Walenz B."/>
            <person name="Shatkay H."/>
            <person name="Dew I."/>
            <person name="Miller J.R."/>
            <person name="Flanigan M.J."/>
            <person name="Edwards N.J."/>
            <person name="Bolanos R."/>
            <person name="Fasulo D."/>
            <person name="Halldorsson B.V."/>
            <person name="Hannenhalli S."/>
            <person name="Turner R."/>
            <person name="Yooseph S."/>
            <person name="Lu F."/>
            <person name="Nusskern D.R."/>
            <person name="Shue B.C."/>
            <person name="Zheng X.H."/>
            <person name="Zhong F."/>
            <person name="Delcher A.L."/>
            <person name="Huson D.H."/>
            <person name="Kravitz S.A."/>
            <person name="Mouchard L."/>
            <person name="Reinert K."/>
            <person name="Remington K.A."/>
            <person name="Clark A.G."/>
            <person name="Waterman M.S."/>
            <person name="Eichler E.E."/>
            <person name="Adams M.D."/>
            <person name="Hunkapiller M.W."/>
            <person name="Myers E.W."/>
            <person name="Venter J.C."/>
        </authorList>
    </citation>
    <scope>NUCLEOTIDE SEQUENCE [LARGE SCALE GENOMIC DNA]</scope>
</reference>
<reference evidence="4" key="2">
    <citation type="journal article" date="2018" name="Nat. Commun.">
        <title>A peptide encoded by circular form of LINC-PINT suppresses oncogenic transcriptional elongation in glioblastoma.</title>
        <authorList>
            <person name="Zhang M."/>
            <person name="Zhao K."/>
            <person name="Xu X."/>
            <person name="Yang Y."/>
            <person name="Yan S."/>
            <person name="Wei P."/>
            <person name="Liu H."/>
            <person name="Xu J."/>
            <person name="Xiao F."/>
            <person name="Zhou H."/>
            <person name="Yang X."/>
            <person name="Huang N."/>
            <person name="Liu J."/>
            <person name="He K."/>
            <person name="Xie K."/>
            <person name="Zhang G."/>
            <person name="Huang S."/>
            <person name="Zhang N."/>
        </authorList>
    </citation>
    <scope>PROTEIN SEQUENCE OF 1-7 AND 37-56</scope>
    <scope>IDENTIFICATION BY MASS SPECTROMETRY</scope>
    <scope>FUNCTION</scope>
    <scope>INTERACTION WITH PAF1</scope>
    <scope>SUBCELLULAR LOCATION</scope>
    <scope>TISSUE SPECIFICITY</scope>
</reference>
<reference evidence="3" key="3">
    <citation type="journal article" date="2021" name="Theranostics">
        <title>Cellular senescence in hepatocellular carcinoma induced by a long non-coding RNA-encoded peptide PINT87aa by blocking FOXM1-mediated PHB2.</title>
        <authorList>
            <person name="Xiang X."/>
            <person name="Fu Y."/>
            <person name="Zhao K."/>
            <person name="Miao R."/>
            <person name="Zhang X."/>
            <person name="Ma X."/>
            <person name="Liu C."/>
            <person name="Zhang N."/>
            <person name="Qu K."/>
        </authorList>
    </citation>
    <scope>FUNCTION</scope>
    <scope>INTERACTION WITH FOXM1</scope>
</reference>
<keyword id="KW-0903">Direct protein sequencing</keyword>
<keyword id="KW-0539">Nucleus</keyword>
<keyword id="KW-1185">Reference proteome</keyword>
<keyword id="KW-0804">Transcription</keyword>
<keyword id="KW-0805">Transcription regulation</keyword>
<sequence>MLWLPDRGSCSARSPSGMLRGAPGGWRYGRRCGRRRQSCCCCCCCSHVGAPLSFHREASLVSHDGHDIMKQHCGEESIRGAHGYKNK</sequence>
<proteinExistence type="evidence at protein level"/>
<comment type="function">
    <text evidence="1 2">Enhances the binding of the PAF1 complex to target gene promoters and plays a role in negative regulation of transcription (PubMed:30367041). May function as an anchor to keep the PAF1 complex on target gene promoters, sequentially pausing RNA polymerase II-induced mRNA elongation (PubMed:30367041). Inhibits FOXM1-mediated transcription of PHB2 (PubMed:33754036).</text>
</comment>
<comment type="subunit">
    <text evidence="1 2">Interacts with PAF1 complex member PAF1 (PubMed:30367041). Interacts with transcription factor FOXM1 (PubMed:33754036).</text>
</comment>
<comment type="interaction">
    <interactant intactId="EBI-27121529">
        <id>A0A455ZAR2</id>
    </interactant>
    <interactant intactId="EBI-866480">
        <id>Q08050</id>
        <label>FOXM1</label>
    </interactant>
    <organismsDiffer>false</organismsDiffer>
    <experiments>4</experiments>
</comment>
<comment type="interaction">
    <interactant intactId="EBI-27121529">
        <id>A0A455ZAR2</id>
    </interactant>
    <interactant intactId="EBI-2607770">
        <id>Q8N7H5</id>
        <label>PAF1</label>
    </interactant>
    <organismsDiffer>false</organismsDiffer>
    <experiments>5</experiments>
</comment>
<comment type="subcellular location">
    <subcellularLocation>
        <location evidence="1">Nucleus</location>
    </subcellularLocation>
</comment>
<comment type="tissue specificity">
    <text evidence="1">Expressed in brain, liver, kidney and stomach with lower levels in breast, intestine, thyroid and pancreas.</text>
</comment>
<comment type="miscellaneous">
    <text evidence="1">Encoded by the circular form of the long non-coding RNA LINC-PINT.</text>
</comment>
<comment type="miscellaneous">
    <text evidence="1 2">Suppresses glioblastoma cell proliferation and shows decreased expression in glioblastomas compared to normal non-tumor brain tissue (PubMed:30367041). Induces growth inhibition and cellular sensescence and decreases mitophagy in hepatocellular carcinoma (HCC) cells with higher levels of expression in non-tumor tissue than in adjacent HCC tissue (PubMed:33754036).</text>
</comment>
<dbReference type="EMBL" id="CH471070">
    <property type="protein sequence ID" value="EAW83777.1"/>
    <property type="molecule type" value="Genomic_DNA"/>
</dbReference>
<dbReference type="EMBL" id="BK010446">
    <property type="protein sequence ID" value="DAC74127.1"/>
    <property type="molecule type" value="Genomic_RNA"/>
</dbReference>
<dbReference type="FunCoup" id="A0A455ZAR2">
    <property type="interactions" value="577"/>
</dbReference>
<dbReference type="IntAct" id="A0A455ZAR2">
    <property type="interactions" value="10"/>
</dbReference>
<dbReference type="AGR" id="HGNC:26885"/>
<dbReference type="GeneCards" id="LINC-PINT"/>
<dbReference type="HGNC" id="HGNC:26885">
    <property type="gene designation" value="LINC-PINT"/>
</dbReference>
<dbReference type="InParanoid" id="A0A455ZAR2"/>
<dbReference type="PRO" id="PR:A0A455ZAR2"/>
<dbReference type="Proteomes" id="UP000005640">
    <property type="component" value="Unplaced"/>
</dbReference>
<dbReference type="GO" id="GO:0005634">
    <property type="term" value="C:nucleus"/>
    <property type="evidence" value="ECO:0000314"/>
    <property type="project" value="UniProtKB"/>
</dbReference>
<dbReference type="GO" id="GO:0000122">
    <property type="term" value="P:negative regulation of transcription by RNA polymerase II"/>
    <property type="evidence" value="ECO:0000315"/>
    <property type="project" value="UniProtKB"/>
</dbReference>
<dbReference type="InterPro" id="IPR054147">
    <property type="entry name" value="LINC-PINT"/>
</dbReference>
<dbReference type="Pfam" id="PF21971">
    <property type="entry name" value="LINC-PINT"/>
    <property type="match status" value="1"/>
</dbReference>
<feature type="chain" id="PRO_0000454938" description="Transcriptional regulator PINT87aa">
    <location>
        <begin position="1"/>
        <end position="87"/>
    </location>
</feature>
<gene>
    <name evidence="6" type="primary">LINC-PINT</name>
</gene>